<organism>
    <name type="scientific">Arabidopsis thaliana</name>
    <name type="common">Mouse-ear cress</name>
    <dbReference type="NCBI Taxonomy" id="3702"/>
    <lineage>
        <taxon>Eukaryota</taxon>
        <taxon>Viridiplantae</taxon>
        <taxon>Streptophyta</taxon>
        <taxon>Embryophyta</taxon>
        <taxon>Tracheophyta</taxon>
        <taxon>Spermatophyta</taxon>
        <taxon>Magnoliopsida</taxon>
        <taxon>eudicotyledons</taxon>
        <taxon>Gunneridae</taxon>
        <taxon>Pentapetalae</taxon>
        <taxon>rosids</taxon>
        <taxon>malvids</taxon>
        <taxon>Brassicales</taxon>
        <taxon>Brassicaceae</taxon>
        <taxon>Camelineae</taxon>
        <taxon>Arabidopsis</taxon>
    </lineage>
</organism>
<accession>Q9LTZ9</accession>
<feature type="chain" id="PRO_0000435704" description="Galactan beta-1,4-galactosyltransferase GALS2">
    <location>
        <begin position="1"/>
        <end position="519"/>
    </location>
</feature>
<feature type="transmembrane region" description="Helical" evidence="2">
    <location>
        <begin position="28"/>
        <end position="48"/>
    </location>
</feature>
<feature type="domain" description="GT92" evidence="2">
    <location>
        <begin position="257"/>
        <end position="471"/>
    </location>
</feature>
<gene>
    <name evidence="4" type="primary">GALS2</name>
    <name evidence="6" type="ordered locus">At5g44670</name>
    <name evidence="7" type="ORF">K15C23.12</name>
</gene>
<comment type="function">
    <text evidence="3">Involved in the biosynthesis of beta-1,4-galactan. Beta-1,4-galactans are abundant polysaccharides in plant cell walls and are found as side-chain of rhamnogalacturonan I, which is a major component of pectin.</text>
</comment>
<comment type="subcellular location">
    <subcellularLocation>
        <location evidence="1">Golgi apparatus membrane</location>
        <topology evidence="2">Single-pass membrane protein</topology>
    </subcellularLocation>
</comment>
<comment type="tissue specificity">
    <text evidence="3">Expressed in the midrib of mature leaves, root vasculature, flower filaments, siliques and seeds.</text>
</comment>
<comment type="disruption phenotype">
    <text evidence="3">No visible phenotype under normal growth conditions, but mutant plants have reduced content of beta-1,4-galactan in leaf cell wall.</text>
</comment>
<comment type="similarity">
    <text evidence="5">Belongs to the glycosyltransferase 92 family.</text>
</comment>
<sequence length="519" mass="59956">MAKERDQNTKDKNLLICFLWNFSAELKLALMALLVLCTLATLLPFLPSSFSISASELRFCISRIAVNSTSVNFTTVVEKPVLDNAVKLTEKPVLDNGVTKQPLTEEKVLNNGVIKRTFTGYGWAAYNFVLMNAYRGGVNTFAVIGLSSKPLHVYSHPTYRCEWIPLNQSDNRILTDGTKILTDWGYGRVYTTVVVNCTFPSNTVINPKNTGGTLLLHATTGDTDRNITDSIPVLTETPNTVDFALYESNLRRREKYDYLYCGSSLYGNLSPQRIREWIAYHVRFFGERSHFVLHDAGGITEEVFEVLKPWIELGRVTVHDIREQERFDGYYHNQFMVVNDCLHRYRFMAKWMFFFDVDEFIYVPAKSSISSVMVSLEEYSQFTIEQMPMSSQLCYDGDGPARTYRKWGFEKLAYRDVKKVPRRDRKYAVQPRNVFATGVHMSQHLQGKTYHRAEGKIRYFHYHGSISQRREPCRHLYNGTRIVHENNPYVLDTTMRDIGLAVKTFEIRTIGDRLLRTRQ</sequence>
<proteinExistence type="evidence at transcript level"/>
<evidence type="ECO:0000250" key="1">
    <source>
        <dbReference type="UniProtKB" id="O22807"/>
    </source>
</evidence>
<evidence type="ECO:0000255" key="2"/>
<evidence type="ECO:0000269" key="3">
    <source>
    </source>
</evidence>
<evidence type="ECO:0000303" key="4">
    <source>
    </source>
</evidence>
<evidence type="ECO:0000305" key="5"/>
<evidence type="ECO:0000312" key="6">
    <source>
        <dbReference type="Araport" id="AT5G44670"/>
    </source>
</evidence>
<evidence type="ECO:0000312" key="7">
    <source>
        <dbReference type="EMBL" id="BAA98120.1"/>
    </source>
</evidence>
<name>GALS2_ARATH</name>
<keyword id="KW-0961">Cell wall biogenesis/degradation</keyword>
<keyword id="KW-0328">Glycosyltransferase</keyword>
<keyword id="KW-0333">Golgi apparatus</keyword>
<keyword id="KW-0472">Membrane</keyword>
<keyword id="KW-1185">Reference proteome</keyword>
<keyword id="KW-0808">Transferase</keyword>
<keyword id="KW-0812">Transmembrane</keyword>
<keyword id="KW-1133">Transmembrane helix</keyword>
<dbReference type="EC" id="2.4.1.-" evidence="5"/>
<dbReference type="EMBL" id="KJ138650">
    <property type="protein sequence ID" value="AHL38590.1"/>
    <property type="molecule type" value="mRNA"/>
</dbReference>
<dbReference type="EMBL" id="AB024024">
    <property type="protein sequence ID" value="BAA98120.1"/>
    <property type="molecule type" value="Genomic_DNA"/>
</dbReference>
<dbReference type="EMBL" id="CP002688">
    <property type="protein sequence ID" value="AED95145.1"/>
    <property type="molecule type" value="Genomic_DNA"/>
</dbReference>
<dbReference type="EMBL" id="AF361577">
    <property type="protein sequence ID" value="AAK32745.1"/>
    <property type="molecule type" value="mRNA"/>
</dbReference>
<dbReference type="EMBL" id="BT002232">
    <property type="protein sequence ID" value="AAN72243.1"/>
    <property type="molecule type" value="mRNA"/>
</dbReference>
<dbReference type="RefSeq" id="NP_199280.1">
    <property type="nucleotide sequence ID" value="NM_123834.2"/>
</dbReference>
<dbReference type="SMR" id="Q9LTZ9"/>
<dbReference type="FunCoup" id="Q9LTZ9">
    <property type="interactions" value="34"/>
</dbReference>
<dbReference type="STRING" id="3702.Q9LTZ9"/>
<dbReference type="CAZy" id="GT92">
    <property type="family name" value="Glycosyltransferase Family 92"/>
</dbReference>
<dbReference type="PaxDb" id="3702-AT5G44670.1"/>
<dbReference type="ProteomicsDB" id="228754"/>
<dbReference type="EnsemblPlants" id="AT5G44670.1">
    <property type="protein sequence ID" value="AT5G44670.1"/>
    <property type="gene ID" value="AT5G44670"/>
</dbReference>
<dbReference type="GeneID" id="834496"/>
<dbReference type="Gramene" id="AT5G44670.1">
    <property type="protein sequence ID" value="AT5G44670.1"/>
    <property type="gene ID" value="AT5G44670"/>
</dbReference>
<dbReference type="KEGG" id="ath:AT5G44670"/>
<dbReference type="Araport" id="AT5G44670"/>
<dbReference type="TAIR" id="AT5G44670">
    <property type="gene designation" value="GALS2"/>
</dbReference>
<dbReference type="eggNOG" id="KOG4735">
    <property type="taxonomic scope" value="Eukaryota"/>
</dbReference>
<dbReference type="HOGENOM" id="CLU_022400_2_0_1"/>
<dbReference type="InParanoid" id="Q9LTZ9"/>
<dbReference type="OMA" id="WAAYNFV"/>
<dbReference type="OrthoDB" id="2526284at2759"/>
<dbReference type="PhylomeDB" id="Q9LTZ9"/>
<dbReference type="PRO" id="PR:Q9LTZ9"/>
<dbReference type="Proteomes" id="UP000006548">
    <property type="component" value="Chromosome 5"/>
</dbReference>
<dbReference type="ExpressionAtlas" id="Q9LTZ9">
    <property type="expression patterns" value="baseline and differential"/>
</dbReference>
<dbReference type="GO" id="GO:0005737">
    <property type="term" value="C:cytoplasm"/>
    <property type="evidence" value="ECO:0007005"/>
    <property type="project" value="TAIR"/>
</dbReference>
<dbReference type="GO" id="GO:0000139">
    <property type="term" value="C:Golgi membrane"/>
    <property type="evidence" value="ECO:0007669"/>
    <property type="project" value="UniProtKB-SubCell"/>
</dbReference>
<dbReference type="GO" id="GO:0005773">
    <property type="term" value="C:vacuole"/>
    <property type="evidence" value="ECO:0007005"/>
    <property type="project" value="TAIR"/>
</dbReference>
<dbReference type="GO" id="GO:0016757">
    <property type="term" value="F:glycosyltransferase activity"/>
    <property type="evidence" value="ECO:0007669"/>
    <property type="project" value="UniProtKB-KW"/>
</dbReference>
<dbReference type="GO" id="GO:0042546">
    <property type="term" value="P:cell wall biogenesis"/>
    <property type="evidence" value="ECO:0000315"/>
    <property type="project" value="TAIR"/>
</dbReference>
<dbReference type="GO" id="GO:0071555">
    <property type="term" value="P:cell wall organization"/>
    <property type="evidence" value="ECO:0007669"/>
    <property type="project" value="UniProtKB-KW"/>
</dbReference>
<dbReference type="InterPro" id="IPR008166">
    <property type="entry name" value="Glyco_transf_92"/>
</dbReference>
<dbReference type="PANTHER" id="PTHR21461:SF12">
    <property type="entry name" value="GALACTAN BETA-1,4-GALACTOSYLTRANSFERASE GALS2"/>
    <property type="match status" value="1"/>
</dbReference>
<dbReference type="PANTHER" id="PTHR21461">
    <property type="entry name" value="GLYCOSYLTRANSFERASE FAMILY 92 PROTEIN"/>
    <property type="match status" value="1"/>
</dbReference>
<dbReference type="Pfam" id="PF01697">
    <property type="entry name" value="Glyco_transf_92"/>
    <property type="match status" value="1"/>
</dbReference>
<reference key="1">
    <citation type="journal article" date="2014" name="Plant J.">
        <title>The plant glycosyltransferase clone collection for functional genomics.</title>
        <authorList>
            <person name="Lao J."/>
            <person name="Oikawa A."/>
            <person name="Bromley J.R."/>
            <person name="McInerney P."/>
            <person name="Suttangkakul A."/>
            <person name="Smith-Moritz A.M."/>
            <person name="Plahar H."/>
            <person name="Chiu T.-Y."/>
            <person name="Gonzalez Fernandez-Nino S.M.G."/>
            <person name="Ebert B."/>
            <person name="Yang F."/>
            <person name="Christiansen K.M."/>
            <person name="Hansen S.F."/>
            <person name="Stonebloom S."/>
            <person name="Adams P.D."/>
            <person name="Ronald P.C."/>
            <person name="Hillson N.J."/>
            <person name="Hadi M.Z."/>
            <person name="Vega-Sanchez M.E."/>
            <person name="Loque D."/>
            <person name="Scheller H.V."/>
            <person name="Heazlewood J.L."/>
        </authorList>
    </citation>
    <scope>NUCLEOTIDE SEQUENCE [MRNA]</scope>
    <source>
        <strain>cv. Columbia</strain>
    </source>
</reference>
<reference key="2">
    <citation type="submission" date="1999-02" db="EMBL/GenBank/DDBJ databases">
        <title>Structural analysis of Arabidopsis thaliana chromosome 5. XI.</title>
        <authorList>
            <person name="Kaneko T."/>
            <person name="Katoh T."/>
            <person name="Asamizu E."/>
            <person name="Sato S."/>
            <person name="Nakamura Y."/>
            <person name="Kotani H."/>
            <person name="Tabata S."/>
        </authorList>
    </citation>
    <scope>NUCLEOTIDE SEQUENCE [LARGE SCALE GENOMIC DNA]</scope>
    <source>
        <strain>cv. Columbia</strain>
    </source>
</reference>
<reference key="3">
    <citation type="journal article" date="2017" name="Plant J.">
        <title>Araport11: a complete reannotation of the Arabidopsis thaliana reference genome.</title>
        <authorList>
            <person name="Cheng C.Y."/>
            <person name="Krishnakumar V."/>
            <person name="Chan A.P."/>
            <person name="Thibaud-Nissen F."/>
            <person name="Schobel S."/>
            <person name="Town C.D."/>
        </authorList>
    </citation>
    <scope>GENOME REANNOTATION</scope>
    <source>
        <strain>cv. Columbia</strain>
    </source>
</reference>
<reference key="4">
    <citation type="journal article" date="2003" name="Science">
        <title>Empirical analysis of transcriptional activity in the Arabidopsis genome.</title>
        <authorList>
            <person name="Yamada K."/>
            <person name="Lim J."/>
            <person name="Dale J.M."/>
            <person name="Chen H."/>
            <person name="Shinn P."/>
            <person name="Palm C.J."/>
            <person name="Southwick A.M."/>
            <person name="Wu H.C."/>
            <person name="Kim C.J."/>
            <person name="Nguyen M."/>
            <person name="Pham P.K."/>
            <person name="Cheuk R.F."/>
            <person name="Karlin-Newmann G."/>
            <person name="Liu S.X."/>
            <person name="Lam B."/>
            <person name="Sakano H."/>
            <person name="Wu T."/>
            <person name="Yu G."/>
            <person name="Miranda M."/>
            <person name="Quach H.L."/>
            <person name="Tripp M."/>
            <person name="Chang C.H."/>
            <person name="Lee J.M."/>
            <person name="Toriumi M.J."/>
            <person name="Chan M.M."/>
            <person name="Tang C.C."/>
            <person name="Onodera C.S."/>
            <person name="Deng J.M."/>
            <person name="Akiyama K."/>
            <person name="Ansari Y."/>
            <person name="Arakawa T."/>
            <person name="Banh J."/>
            <person name="Banno F."/>
            <person name="Bowser L."/>
            <person name="Brooks S.Y."/>
            <person name="Carninci P."/>
            <person name="Chao Q."/>
            <person name="Choy N."/>
            <person name="Enju A."/>
            <person name="Goldsmith A.D."/>
            <person name="Gurjal M."/>
            <person name="Hansen N.F."/>
            <person name="Hayashizaki Y."/>
            <person name="Johnson-Hopson C."/>
            <person name="Hsuan V.W."/>
            <person name="Iida K."/>
            <person name="Karnes M."/>
            <person name="Khan S."/>
            <person name="Koesema E."/>
            <person name="Ishida J."/>
            <person name="Jiang P.X."/>
            <person name="Jones T."/>
            <person name="Kawai J."/>
            <person name="Kamiya A."/>
            <person name="Meyers C."/>
            <person name="Nakajima M."/>
            <person name="Narusaka M."/>
            <person name="Seki M."/>
            <person name="Sakurai T."/>
            <person name="Satou M."/>
            <person name="Tamse R."/>
            <person name="Vaysberg M."/>
            <person name="Wallender E.K."/>
            <person name="Wong C."/>
            <person name="Yamamura Y."/>
            <person name="Yuan S."/>
            <person name="Shinozaki K."/>
            <person name="Davis R.W."/>
            <person name="Theologis A."/>
            <person name="Ecker J.R."/>
        </authorList>
    </citation>
    <scope>NUCLEOTIDE SEQUENCE [LARGE SCALE MRNA]</scope>
    <source>
        <strain>cv. Columbia</strain>
    </source>
</reference>
<reference key="5">
    <citation type="journal article" date="2012" name="Plant Cell">
        <title>Pectin biosynthesis: GALS1 in Arabidopsis thaliana is a beta-1,4-galactan beta-1,4-galactosyltransferase.</title>
        <authorList>
            <person name="Liwanag A.J."/>
            <person name="Ebert B."/>
            <person name="Verhertbruggen Y."/>
            <person name="Rennie E.A."/>
            <person name="Rautengarten C."/>
            <person name="Oikawa A."/>
            <person name="Andersen M.C."/>
            <person name="Clausen M.H."/>
            <person name="Scheller H.V."/>
        </authorList>
    </citation>
    <scope>FUNCTION</scope>
    <scope>TISSUE SPECIFICITY</scope>
    <scope>DISRUPTION PHENOTYPE</scope>
</reference>
<protein>
    <recommendedName>
        <fullName evidence="5">Galactan beta-1,4-galactosyltransferase GALS2</fullName>
        <ecNumber evidence="5">2.4.1.-</ecNumber>
    </recommendedName>
    <alternativeName>
        <fullName>Beta-1,4-galactan synthase</fullName>
    </alternativeName>
    <alternativeName>
        <fullName evidence="4">Galactan synthase 2</fullName>
    </alternativeName>
</protein>